<evidence type="ECO:0000255" key="1">
    <source>
        <dbReference type="HAMAP-Rule" id="MF_01363"/>
    </source>
</evidence>
<evidence type="ECO:0000305" key="2"/>
<name>RL21_THEMA</name>
<accession>Q9X1G9</accession>
<gene>
    <name evidence="1" type="primary">rplU</name>
    <name type="ordered locus">TM_1458</name>
</gene>
<dbReference type="EMBL" id="AE000512">
    <property type="protein sequence ID" value="AAD36526.1"/>
    <property type="molecule type" value="Genomic_DNA"/>
</dbReference>
<dbReference type="PIR" id="C72251">
    <property type="entry name" value="C72251"/>
</dbReference>
<dbReference type="RefSeq" id="NP_229257.1">
    <property type="nucleotide sequence ID" value="NC_000853.1"/>
</dbReference>
<dbReference type="SMR" id="Q9X1G9"/>
<dbReference type="FunCoup" id="Q9X1G9">
    <property type="interactions" value="322"/>
</dbReference>
<dbReference type="STRING" id="243274.TM_1458"/>
<dbReference type="PaxDb" id="243274-THEMA_07025"/>
<dbReference type="EnsemblBacteria" id="AAD36526">
    <property type="protein sequence ID" value="AAD36526"/>
    <property type="gene ID" value="TM_1458"/>
</dbReference>
<dbReference type="KEGG" id="tma:TM1458"/>
<dbReference type="PATRIC" id="fig|243274.5.peg.1472"/>
<dbReference type="eggNOG" id="COG0261">
    <property type="taxonomic scope" value="Bacteria"/>
</dbReference>
<dbReference type="InParanoid" id="Q9X1G9"/>
<dbReference type="OrthoDB" id="9813334at2"/>
<dbReference type="Proteomes" id="UP000008183">
    <property type="component" value="Chromosome"/>
</dbReference>
<dbReference type="GO" id="GO:0005737">
    <property type="term" value="C:cytoplasm"/>
    <property type="evidence" value="ECO:0007669"/>
    <property type="project" value="UniProtKB-ARBA"/>
</dbReference>
<dbReference type="GO" id="GO:1990904">
    <property type="term" value="C:ribonucleoprotein complex"/>
    <property type="evidence" value="ECO:0007669"/>
    <property type="project" value="UniProtKB-KW"/>
</dbReference>
<dbReference type="GO" id="GO:0005840">
    <property type="term" value="C:ribosome"/>
    <property type="evidence" value="ECO:0007669"/>
    <property type="project" value="UniProtKB-KW"/>
</dbReference>
<dbReference type="GO" id="GO:0019843">
    <property type="term" value="F:rRNA binding"/>
    <property type="evidence" value="ECO:0007669"/>
    <property type="project" value="UniProtKB-UniRule"/>
</dbReference>
<dbReference type="GO" id="GO:0003735">
    <property type="term" value="F:structural constituent of ribosome"/>
    <property type="evidence" value="ECO:0000318"/>
    <property type="project" value="GO_Central"/>
</dbReference>
<dbReference type="GO" id="GO:0006412">
    <property type="term" value="P:translation"/>
    <property type="evidence" value="ECO:0007669"/>
    <property type="project" value="UniProtKB-UniRule"/>
</dbReference>
<dbReference type="HAMAP" id="MF_01363">
    <property type="entry name" value="Ribosomal_bL21"/>
    <property type="match status" value="1"/>
</dbReference>
<dbReference type="InterPro" id="IPR028909">
    <property type="entry name" value="bL21-like"/>
</dbReference>
<dbReference type="InterPro" id="IPR036164">
    <property type="entry name" value="bL21-like_sf"/>
</dbReference>
<dbReference type="InterPro" id="IPR001787">
    <property type="entry name" value="Ribosomal_bL21"/>
</dbReference>
<dbReference type="InterPro" id="IPR018258">
    <property type="entry name" value="Ribosomal_bL21_CS"/>
</dbReference>
<dbReference type="NCBIfam" id="TIGR00061">
    <property type="entry name" value="L21"/>
    <property type="match status" value="1"/>
</dbReference>
<dbReference type="PANTHER" id="PTHR21349">
    <property type="entry name" value="50S RIBOSOMAL PROTEIN L21"/>
    <property type="match status" value="1"/>
</dbReference>
<dbReference type="PANTHER" id="PTHR21349:SF0">
    <property type="entry name" value="LARGE RIBOSOMAL SUBUNIT PROTEIN BL21M"/>
    <property type="match status" value="1"/>
</dbReference>
<dbReference type="Pfam" id="PF00829">
    <property type="entry name" value="Ribosomal_L21p"/>
    <property type="match status" value="1"/>
</dbReference>
<dbReference type="SUPFAM" id="SSF141091">
    <property type="entry name" value="L21p-like"/>
    <property type="match status" value="1"/>
</dbReference>
<dbReference type="PROSITE" id="PS01169">
    <property type="entry name" value="RIBOSOMAL_L21"/>
    <property type="match status" value="1"/>
</dbReference>
<feature type="chain" id="PRO_0000181017" description="Large ribosomal subunit protein bL21">
    <location>
        <begin position="1"/>
        <end position="105"/>
    </location>
</feature>
<proteinExistence type="inferred from homology"/>
<protein>
    <recommendedName>
        <fullName evidence="1">Large ribosomal subunit protein bL21</fullName>
    </recommendedName>
    <alternativeName>
        <fullName evidence="2">50S ribosomal protein L21</fullName>
    </alternativeName>
</protein>
<organism>
    <name type="scientific">Thermotoga maritima (strain ATCC 43589 / DSM 3109 / JCM 10099 / NBRC 100826 / MSB8)</name>
    <dbReference type="NCBI Taxonomy" id="243274"/>
    <lineage>
        <taxon>Bacteria</taxon>
        <taxon>Thermotogati</taxon>
        <taxon>Thermotogota</taxon>
        <taxon>Thermotogae</taxon>
        <taxon>Thermotogales</taxon>
        <taxon>Thermotogaceae</taxon>
        <taxon>Thermotoga</taxon>
    </lineage>
</organism>
<keyword id="KW-1185">Reference proteome</keyword>
<keyword id="KW-0687">Ribonucleoprotein</keyword>
<keyword id="KW-0689">Ribosomal protein</keyword>
<keyword id="KW-0694">RNA-binding</keyword>
<keyword id="KW-0699">rRNA-binding</keyword>
<comment type="function">
    <text evidence="1">This protein binds to 23S rRNA in the presence of protein L20.</text>
</comment>
<comment type="subunit">
    <text evidence="1">Part of the 50S ribosomal subunit. Contacts protein L20.</text>
</comment>
<comment type="similarity">
    <text evidence="1">Belongs to the bacterial ribosomal protein bL21 family.</text>
</comment>
<reference key="1">
    <citation type="journal article" date="1999" name="Nature">
        <title>Evidence for lateral gene transfer between Archaea and Bacteria from genome sequence of Thermotoga maritima.</title>
        <authorList>
            <person name="Nelson K.E."/>
            <person name="Clayton R.A."/>
            <person name="Gill S.R."/>
            <person name="Gwinn M.L."/>
            <person name="Dodson R.J."/>
            <person name="Haft D.H."/>
            <person name="Hickey E.K."/>
            <person name="Peterson J.D."/>
            <person name="Nelson W.C."/>
            <person name="Ketchum K.A."/>
            <person name="McDonald L.A."/>
            <person name="Utterback T.R."/>
            <person name="Malek J.A."/>
            <person name="Linher K.D."/>
            <person name="Garrett M.M."/>
            <person name="Stewart A.M."/>
            <person name="Cotton M.D."/>
            <person name="Pratt M.S."/>
            <person name="Phillips C.A."/>
            <person name="Richardson D.L."/>
            <person name="Heidelberg J.F."/>
            <person name="Sutton G.G."/>
            <person name="Fleischmann R.D."/>
            <person name="Eisen J.A."/>
            <person name="White O."/>
            <person name="Salzberg S.L."/>
            <person name="Smith H.O."/>
            <person name="Venter J.C."/>
            <person name="Fraser C.M."/>
        </authorList>
    </citation>
    <scope>NUCLEOTIDE SEQUENCE [LARGE SCALE GENOMIC DNA]</scope>
    <source>
        <strain>ATCC 43589 / DSM 3109 / JCM 10099 / NBRC 100826 / MSB8</strain>
    </source>
</reference>
<sequence length="105" mass="12210">MLYAIVETAGRQYRVEEGKILYTEKQKDYSPGDEIVFDRVVFVRKDGEVLVGKPYVEGAKVVGKVLEHAKARKVKTVKYRPRKNSKVEKGHRQWYTAIKIEKIEL</sequence>